<evidence type="ECO:0000250" key="1">
    <source>
        <dbReference type="UniProtKB" id="P02634"/>
    </source>
</evidence>
<evidence type="ECO:0000255" key="2">
    <source>
        <dbReference type="PROSITE-ProRule" id="PRU00448"/>
    </source>
</evidence>
<evidence type="ECO:0000269" key="3">
    <source>
    </source>
</evidence>
<evidence type="ECO:0000305" key="4"/>
<evidence type="ECO:0007829" key="5">
    <source>
        <dbReference type="PDB" id="1B1G"/>
    </source>
</evidence>
<evidence type="ECO:0007829" key="6">
    <source>
        <dbReference type="PDB" id="1QX2"/>
    </source>
</evidence>
<evidence type="ECO:0007829" key="7">
    <source>
        <dbReference type="PDB" id="4ICB"/>
    </source>
</evidence>
<accession>P02633</accession>
<accession>Q17Q94</accession>
<name>S100G_BOVIN</name>
<reference key="1">
    <citation type="journal article" date="1989" name="Mol. Endocrinol.">
        <title>The molecular cloning of the complementary deoxyribonucleic acid for bovine vitamin D-dependent calcium-binding protein: structure of the full-length protein and evidence for homologies with other calcium-binding proteins of the troponin-C superfamily of proteins.</title>
        <authorList>
            <person name="Kumar R."/>
            <person name="Wieben E."/>
            <person name="Beecher S.J."/>
        </authorList>
    </citation>
    <scope>NUCLEOTIDE SEQUENCE [MRNA]</scope>
</reference>
<reference key="2">
    <citation type="submission" date="2006-06" db="EMBL/GenBank/DDBJ databases">
        <authorList>
            <consortium name="NIH - Mammalian Gene Collection (MGC) project"/>
        </authorList>
    </citation>
    <scope>NUCLEOTIDE SEQUENCE [LARGE SCALE MRNA]</scope>
    <source>
        <strain>Hereford</strain>
        <tissue>Placenta</tissue>
    </source>
</reference>
<reference key="3">
    <citation type="journal article" date="1981" name="J. Biol. Chem.">
        <title>The amino acid sequence of bovine intestinal calcium-binding protein.</title>
        <authorList>
            <person name="Fullmer C.S."/>
            <person name="Wasserman R.H."/>
        </authorList>
    </citation>
    <scope>PROTEIN SEQUENCE OF 5-79</scope>
</reference>
<reference key="4">
    <citation type="journal article" date="1981" name="Nature">
        <title>Structure of vitamin D-dependent calcium-binding protein from bovine intestine.</title>
        <authorList>
            <person name="Szebenyi D.M.E."/>
            <person name="Obendorf S.K."/>
            <person name="Moffat K."/>
        </authorList>
    </citation>
    <scope>X-RAY CRYSTALLOGRAPHY (2.3 ANGSTROMS)</scope>
    <scope>ACETYLATION AT SER-2</scope>
</reference>
<reference key="5">
    <citation type="journal article" date="1986" name="J. Biol. Chem.">
        <title>The refined structure of vitamin D-dependent calcium-binding protein from bovine intestine. Molecular details, ion binding, and implications for the structure of other calcium-binding proteins.</title>
        <authorList>
            <person name="Szebenyi D.M.E."/>
            <person name="Moffat K."/>
        </authorList>
    </citation>
    <scope>X-RAY STRUCTURE REFINEMENT</scope>
</reference>
<reference key="6">
    <citation type="journal article" date="1997" name="Protein Sci.">
        <title>Structural basis for the negative allostery between Ca(2+)- and Mg(2+)-binding in the intracellular Ca(2+)-receptor calbindin D9k.</title>
        <authorList>
            <person name="Andersson M."/>
            <person name="Malmendal A."/>
            <person name="Linse S."/>
            <person name="Ivarsson I."/>
            <person name="Forsen S."/>
            <person name="Svensson L.A."/>
        </authorList>
    </citation>
    <scope>X-RAY CRYSTALLOGRAPHY (1.6 ANGSTROMS)</scope>
</reference>
<reference key="7">
    <citation type="journal article" date="1990" name="Biochemistry">
        <title>The rate and structural consequences of proline cis-trans isomerization in calbindin D9k: NMR studies of the minor (cis-Pro43) isoform and the Pro43Gly mutant.</title>
        <authorList>
            <person name="Kordel J."/>
            <person name="Forsen S."/>
            <person name="Drakenberg T."/>
            <person name="Chazin W.J."/>
        </authorList>
    </citation>
    <scope>STRUCTURE BY NMR</scope>
</reference>
<reference key="8">
    <citation type="journal article" date="1990" name="Biochemistry">
        <title>1H NMR resonance assignments, secondary structure, and global fold of Apo bovine calbindin D9k.</title>
        <authorList>
            <person name="Skelton N.J."/>
            <person name="Forsen S."/>
            <person name="Chazin W.J."/>
        </authorList>
    </citation>
    <scope>STRUCTURE BY NMR</scope>
</reference>
<reference key="9">
    <citation type="journal article" date="1991" name="J. Mol. Biol.">
        <title>Molecular basis for co-operativity in Ca2+ binding to calbindin D9k. 1H nuclear magnetic resonance studies of (Cd2+)1-bovine calbindin D9k.</title>
        <authorList>
            <person name="Akke M."/>
            <person name="Forsen S."/>
            <person name="Chazin W.J."/>
        </authorList>
    </citation>
    <scope>STRUCTURE BY NMR</scope>
</reference>
<reference key="10">
    <citation type="journal article" date="1995" name="J. Mol. Biol.">
        <title>Solution structure of (Cd2+)1-calbindin D9k reveals details of the stepwise structural changes along the Apo--&gt;(Ca2+)II1--&gt;(Ca2+)I,II2 binding pathway.</title>
        <authorList>
            <person name="Akke M."/>
            <person name="Forsen S."/>
            <person name="Chazin W.J."/>
        </authorList>
    </citation>
    <scope>STRUCTURE BY NMR</scope>
</reference>
<reference key="11">
    <citation type="journal article" date="1997" name="J. Biomol. NMR">
        <title>Protein solution structure calculations in solution: solvated molecular dynamics refinement of calbindin D9k.</title>
        <authorList>
            <person name="Kordel J."/>
            <person name="Pearlman D.A."/>
            <person name="Chazin W.J."/>
        </authorList>
    </citation>
    <scope>STRUCTURE BY NMR</scope>
</reference>
<comment type="similarity">
    <text evidence="4">Belongs to the S-100 family.</text>
</comment>
<sequence>MSAKKSPEELKGIFEKYAAKEGDPNQLSKEELKLLLQTEFPSLLKGPSTLDELFEELDKNGDGEVSFEEFQVLVKKISQ</sequence>
<organism>
    <name type="scientific">Bos taurus</name>
    <name type="common">Bovine</name>
    <dbReference type="NCBI Taxonomy" id="9913"/>
    <lineage>
        <taxon>Eukaryota</taxon>
        <taxon>Metazoa</taxon>
        <taxon>Chordata</taxon>
        <taxon>Craniata</taxon>
        <taxon>Vertebrata</taxon>
        <taxon>Euteleostomi</taxon>
        <taxon>Mammalia</taxon>
        <taxon>Eutheria</taxon>
        <taxon>Laurasiatheria</taxon>
        <taxon>Artiodactyla</taxon>
        <taxon>Ruminantia</taxon>
        <taxon>Pecora</taxon>
        <taxon>Bovidae</taxon>
        <taxon>Bovinae</taxon>
        <taxon>Bos</taxon>
    </lineage>
</organism>
<feature type="initiator methionine" description="Removed">
    <location>
        <position position="1"/>
    </location>
</feature>
<feature type="chain" id="PRO_0000144026" description="Protein S100-G">
    <location>
        <begin position="2"/>
        <end position="79"/>
    </location>
</feature>
<feature type="domain" description="EF-hand 1" evidence="4">
    <location>
        <begin position="13"/>
        <end position="48"/>
    </location>
</feature>
<feature type="domain" description="EF-hand 2" evidence="2">
    <location>
        <begin position="45"/>
        <end position="79"/>
    </location>
</feature>
<feature type="binding site" evidence="4">
    <location>
        <position position="26"/>
    </location>
    <ligand>
        <name>Ca(2+)</name>
        <dbReference type="ChEBI" id="CHEBI:29108"/>
        <label>1</label>
        <note>low affinity</note>
    </ligand>
</feature>
<feature type="binding site" evidence="4">
    <location>
        <position position="31"/>
    </location>
    <ligand>
        <name>Ca(2+)</name>
        <dbReference type="ChEBI" id="CHEBI:29108"/>
        <label>1</label>
        <note>low affinity</note>
    </ligand>
</feature>
<feature type="binding site" evidence="2">
    <location>
        <position position="58"/>
    </location>
    <ligand>
        <name>Ca(2+)</name>
        <dbReference type="ChEBI" id="CHEBI:29108"/>
        <label>2</label>
        <note>high affinity</note>
    </ligand>
</feature>
<feature type="binding site" evidence="2">
    <location>
        <position position="60"/>
    </location>
    <ligand>
        <name>Ca(2+)</name>
        <dbReference type="ChEBI" id="CHEBI:29108"/>
        <label>2</label>
        <note>high affinity</note>
    </ligand>
</feature>
<feature type="binding site" evidence="2">
    <location>
        <position position="62"/>
    </location>
    <ligand>
        <name>Ca(2+)</name>
        <dbReference type="ChEBI" id="CHEBI:29108"/>
        <label>2</label>
        <note>high affinity</note>
    </ligand>
</feature>
<feature type="binding site" evidence="2">
    <location>
        <position position="64"/>
    </location>
    <ligand>
        <name>Ca(2+)</name>
        <dbReference type="ChEBI" id="CHEBI:29108"/>
        <label>2</label>
        <note>high affinity</note>
    </ligand>
</feature>
<feature type="binding site" evidence="2">
    <location>
        <position position="69"/>
    </location>
    <ligand>
        <name>Ca(2+)</name>
        <dbReference type="ChEBI" id="CHEBI:29108"/>
        <label>2</label>
        <note>high affinity</note>
    </ligand>
</feature>
<feature type="modified residue" description="N-acetylserine" evidence="3">
    <location>
        <position position="2"/>
    </location>
</feature>
<feature type="modified residue" description="Phosphoserine" evidence="1">
    <location>
        <position position="42"/>
    </location>
</feature>
<feature type="helix" evidence="6">
    <location>
        <begin position="7"/>
        <end position="18"/>
    </location>
</feature>
<feature type="strand" evidence="6">
    <location>
        <begin position="20"/>
        <end position="22"/>
    </location>
</feature>
<feature type="strand" evidence="6">
    <location>
        <begin position="26"/>
        <end position="28"/>
    </location>
</feature>
<feature type="helix" evidence="6">
    <location>
        <begin position="29"/>
        <end position="39"/>
    </location>
</feature>
<feature type="helix" evidence="6">
    <location>
        <begin position="40"/>
        <end position="42"/>
    </location>
</feature>
<feature type="strand" evidence="7">
    <location>
        <begin position="45"/>
        <end position="48"/>
    </location>
</feature>
<feature type="helix" evidence="6">
    <location>
        <begin position="50"/>
        <end position="57"/>
    </location>
</feature>
<feature type="strand" evidence="5">
    <location>
        <begin position="58"/>
        <end position="60"/>
    </location>
</feature>
<feature type="strand" evidence="6">
    <location>
        <begin position="62"/>
        <end position="65"/>
    </location>
</feature>
<feature type="helix" evidence="6">
    <location>
        <begin position="67"/>
        <end position="77"/>
    </location>
</feature>
<dbReference type="EMBL" id="M18344">
    <property type="protein sequence ID" value="AAA30420.1"/>
    <property type="molecule type" value="mRNA"/>
</dbReference>
<dbReference type="EMBL" id="BC118480">
    <property type="protein sequence ID" value="AAI18481.1"/>
    <property type="molecule type" value="mRNA"/>
</dbReference>
<dbReference type="PIR" id="A40151">
    <property type="entry name" value="KLBOI"/>
</dbReference>
<dbReference type="RefSeq" id="NP_776682.1">
    <property type="nucleotide sequence ID" value="NM_174257.3"/>
</dbReference>
<dbReference type="PDB" id="1B1G">
    <property type="method" value="NMR"/>
    <property type="chains" value="A=5-79"/>
</dbReference>
<dbReference type="PDB" id="1BOC">
    <property type="method" value="NMR"/>
    <property type="chains" value="A=5-79"/>
</dbReference>
<dbReference type="PDB" id="1BOD">
    <property type="method" value="NMR"/>
    <property type="chains" value="A=5-79"/>
</dbReference>
<dbReference type="PDB" id="1CDN">
    <property type="method" value="NMR"/>
    <property type="chains" value="A=5-79"/>
</dbReference>
<dbReference type="PDB" id="1CLB">
    <property type="method" value="NMR"/>
    <property type="chains" value="A=5-79"/>
</dbReference>
<dbReference type="PDB" id="1D1O">
    <property type="method" value="NMR"/>
    <property type="chains" value="A=5-79"/>
</dbReference>
<dbReference type="PDB" id="1HT9">
    <property type="method" value="X-ray"/>
    <property type="resolution" value="1.76 A"/>
    <property type="chains" value="A/B=5-79"/>
</dbReference>
<dbReference type="PDB" id="1IG5">
    <property type="method" value="X-ray"/>
    <property type="resolution" value="1.50 A"/>
    <property type="chains" value="A=5-79"/>
</dbReference>
<dbReference type="PDB" id="1IGV">
    <property type="method" value="X-ray"/>
    <property type="resolution" value="1.85 A"/>
    <property type="chains" value="A=5-79"/>
</dbReference>
<dbReference type="PDB" id="1KCY">
    <property type="method" value="NMR"/>
    <property type="chains" value="A=5-79"/>
</dbReference>
<dbReference type="PDB" id="1KQV">
    <property type="method" value="NMR"/>
    <property type="chains" value="A=1-79"/>
</dbReference>
<dbReference type="PDB" id="1KSM">
    <property type="method" value="NMR"/>
    <property type="chains" value="A=1-79"/>
</dbReference>
<dbReference type="PDB" id="1N65">
    <property type="method" value="NMR"/>
    <property type="chains" value="A=5-79"/>
</dbReference>
<dbReference type="PDB" id="1QX2">
    <property type="method" value="X-ray"/>
    <property type="resolution" value="1.44 A"/>
    <property type="chains" value="A/B=5-79"/>
</dbReference>
<dbReference type="PDB" id="1RT0">
    <property type="method" value="NMR"/>
    <property type="chains" value="A=58-69"/>
</dbReference>
<dbReference type="PDB" id="2BCA">
    <property type="method" value="NMR"/>
    <property type="chains" value="A=5-79"/>
</dbReference>
<dbReference type="PDB" id="2BCB">
    <property type="method" value="NMR"/>
    <property type="chains" value="A=5-79"/>
</dbReference>
<dbReference type="PDB" id="2MAZ">
    <property type="method" value="NMR"/>
    <property type="chains" value="A=5-79"/>
</dbReference>
<dbReference type="PDB" id="3ICB">
    <property type="method" value="X-ray"/>
    <property type="resolution" value="2.30 A"/>
    <property type="chains" value="A=5-79"/>
</dbReference>
<dbReference type="PDB" id="4ICB">
    <property type="method" value="X-ray"/>
    <property type="resolution" value="1.60 A"/>
    <property type="chains" value="A=5-79"/>
</dbReference>
<dbReference type="PDBsum" id="1B1G"/>
<dbReference type="PDBsum" id="1BOC"/>
<dbReference type="PDBsum" id="1BOD"/>
<dbReference type="PDBsum" id="1CDN"/>
<dbReference type="PDBsum" id="1CLB"/>
<dbReference type="PDBsum" id="1D1O"/>
<dbReference type="PDBsum" id="1HT9"/>
<dbReference type="PDBsum" id="1IG5"/>
<dbReference type="PDBsum" id="1IGV"/>
<dbReference type="PDBsum" id="1KCY"/>
<dbReference type="PDBsum" id="1KQV"/>
<dbReference type="PDBsum" id="1KSM"/>
<dbReference type="PDBsum" id="1N65"/>
<dbReference type="PDBsum" id="1QX2"/>
<dbReference type="PDBsum" id="1RT0"/>
<dbReference type="PDBsum" id="2BCA"/>
<dbReference type="PDBsum" id="2BCB"/>
<dbReference type="PDBsum" id="2MAZ"/>
<dbReference type="PDBsum" id="3ICB"/>
<dbReference type="PDBsum" id="4ICB"/>
<dbReference type="BMRB" id="P02633"/>
<dbReference type="SMR" id="P02633"/>
<dbReference type="FunCoup" id="P02633">
    <property type="interactions" value="5"/>
</dbReference>
<dbReference type="STRING" id="9913.ENSBTAP00000022630"/>
<dbReference type="iPTMnet" id="P02633"/>
<dbReference type="PaxDb" id="9913-ENSBTAP00000022630"/>
<dbReference type="Ensembl" id="ENSBTAT00000022630.5">
    <property type="protein sequence ID" value="ENSBTAP00000022630.3"/>
    <property type="gene ID" value="ENSBTAG00000017020.5"/>
</dbReference>
<dbReference type="GeneID" id="281658"/>
<dbReference type="KEGG" id="bta:281658"/>
<dbReference type="CTD" id="795"/>
<dbReference type="VEuPathDB" id="HostDB:ENSBTAG00000017020"/>
<dbReference type="VGNC" id="VGNC:34249">
    <property type="gene designation" value="S100G"/>
</dbReference>
<dbReference type="eggNOG" id="ENOG502T3Z3">
    <property type="taxonomic scope" value="Eukaryota"/>
</dbReference>
<dbReference type="GeneTree" id="ENSGT00530000064238"/>
<dbReference type="HOGENOM" id="CLU_138624_4_0_1"/>
<dbReference type="InParanoid" id="P02633"/>
<dbReference type="OMA" id="QKYAAKE"/>
<dbReference type="OrthoDB" id="26525at2759"/>
<dbReference type="TreeFam" id="TF332727"/>
<dbReference type="EvolutionaryTrace" id="P02633"/>
<dbReference type="Proteomes" id="UP000009136">
    <property type="component" value="Chromosome X"/>
</dbReference>
<dbReference type="Bgee" id="ENSBTAG00000017020">
    <property type="expression patterns" value="Expressed in placenta and 91 other cell types or tissues"/>
</dbReference>
<dbReference type="GO" id="GO:0016324">
    <property type="term" value="C:apical plasma membrane"/>
    <property type="evidence" value="ECO:0007669"/>
    <property type="project" value="Ensembl"/>
</dbReference>
<dbReference type="GO" id="GO:0016323">
    <property type="term" value="C:basolateral plasma membrane"/>
    <property type="evidence" value="ECO:0007669"/>
    <property type="project" value="Ensembl"/>
</dbReference>
<dbReference type="GO" id="GO:0005737">
    <property type="term" value="C:cytoplasm"/>
    <property type="evidence" value="ECO:0000318"/>
    <property type="project" value="GO_Central"/>
</dbReference>
<dbReference type="GO" id="GO:0005509">
    <property type="term" value="F:calcium ion binding"/>
    <property type="evidence" value="ECO:0000318"/>
    <property type="project" value="GO_Central"/>
</dbReference>
<dbReference type="GO" id="GO:0048306">
    <property type="term" value="F:calcium-dependent protein binding"/>
    <property type="evidence" value="ECO:0000318"/>
    <property type="project" value="GO_Central"/>
</dbReference>
<dbReference type="GO" id="GO:0005499">
    <property type="term" value="F:vitamin D binding"/>
    <property type="evidence" value="ECO:0007669"/>
    <property type="project" value="UniProtKB-KW"/>
</dbReference>
<dbReference type="FunFam" id="1.10.238.10:FF:000236">
    <property type="entry name" value="Protein S100"/>
    <property type="match status" value="1"/>
</dbReference>
<dbReference type="Gene3D" id="1.10.238.10">
    <property type="entry name" value="EF-hand"/>
    <property type="match status" value="1"/>
</dbReference>
<dbReference type="InterPro" id="IPR011992">
    <property type="entry name" value="EF-hand-dom_pair"/>
</dbReference>
<dbReference type="InterPro" id="IPR018247">
    <property type="entry name" value="EF_Hand_1_Ca_BS"/>
</dbReference>
<dbReference type="InterPro" id="IPR002048">
    <property type="entry name" value="EF_hand_dom"/>
</dbReference>
<dbReference type="InterPro" id="IPR001751">
    <property type="entry name" value="S100/CaBP7/8-like_CS"/>
</dbReference>
<dbReference type="InterPro" id="IPR013787">
    <property type="entry name" value="S100_Ca-bd_sub"/>
</dbReference>
<dbReference type="PANTHER" id="PTHR11639:SF73">
    <property type="entry name" value="PROTEIN S100-G"/>
    <property type="match status" value="1"/>
</dbReference>
<dbReference type="PANTHER" id="PTHR11639">
    <property type="entry name" value="S100 CALCIUM-BINDING PROTEIN"/>
    <property type="match status" value="1"/>
</dbReference>
<dbReference type="Pfam" id="PF00036">
    <property type="entry name" value="EF-hand_1"/>
    <property type="match status" value="1"/>
</dbReference>
<dbReference type="Pfam" id="PF01023">
    <property type="entry name" value="S_100"/>
    <property type="match status" value="1"/>
</dbReference>
<dbReference type="SMART" id="SM00054">
    <property type="entry name" value="EFh"/>
    <property type="match status" value="1"/>
</dbReference>
<dbReference type="SMART" id="SM01394">
    <property type="entry name" value="S_100"/>
    <property type="match status" value="1"/>
</dbReference>
<dbReference type="SUPFAM" id="SSF47473">
    <property type="entry name" value="EF-hand"/>
    <property type="match status" value="1"/>
</dbReference>
<dbReference type="PROSITE" id="PS00018">
    <property type="entry name" value="EF_HAND_1"/>
    <property type="match status" value="1"/>
</dbReference>
<dbReference type="PROSITE" id="PS50222">
    <property type="entry name" value="EF_HAND_2"/>
    <property type="match status" value="1"/>
</dbReference>
<dbReference type="PROSITE" id="PS00303">
    <property type="entry name" value="S100_CABP"/>
    <property type="match status" value="1"/>
</dbReference>
<gene>
    <name type="primary">S100G</name>
    <name type="synonym">CALB3</name>
    <name type="synonym">S100D</name>
</gene>
<keyword id="KW-0002">3D-structure</keyword>
<keyword id="KW-0007">Acetylation</keyword>
<keyword id="KW-0106">Calcium</keyword>
<keyword id="KW-0903">Direct protein sequencing</keyword>
<keyword id="KW-0479">Metal-binding</keyword>
<keyword id="KW-0597">Phosphoprotein</keyword>
<keyword id="KW-1185">Reference proteome</keyword>
<keyword id="KW-0677">Repeat</keyword>
<keyword id="KW-0848">Vitamin D</keyword>
<proteinExistence type="evidence at protein level"/>
<protein>
    <recommendedName>
        <fullName>Protein S100-G</fullName>
    </recommendedName>
    <alternativeName>
        <fullName>Calbindin-D9k</fullName>
    </alternativeName>
    <alternativeName>
        <fullName>S100 calcium-binding protein G</fullName>
    </alternativeName>
    <alternativeName>
        <fullName>Vitamin D-dependent calcium-binding protein, intestinal</fullName>
        <shortName>CABP</shortName>
    </alternativeName>
</protein>